<evidence type="ECO:0000305" key="1"/>
<gene>
    <name type="primary">Mst84Da</name>
    <name type="ORF">CG17946</name>
</gene>
<keyword id="KW-0217">Developmental protein</keyword>
<keyword id="KW-0221">Differentiation</keyword>
<keyword id="KW-1185">Reference proteome</keyword>
<keyword id="KW-0677">Repeat</keyword>
<keyword id="KW-0744">Spermatogenesis</keyword>
<protein>
    <recommendedName>
        <fullName>Male-specific sperm protein Mst84Da</fullName>
    </recommendedName>
</protein>
<reference key="1">
    <citation type="journal article" date="1991" name="Mech. Dev.">
        <title>A cluster of four genes selectively expressed in the male germ line of Drosophila melanogaster.</title>
        <authorList>
            <person name="Kuhn R."/>
            <person name="Kuhn C."/>
            <person name="Boersch D."/>
            <person name="Glaetzer K.H."/>
            <person name="Schaefer U."/>
            <person name="Schaefer M."/>
        </authorList>
    </citation>
    <scope>NUCLEOTIDE SEQUENCE [GENOMIC DNA]</scope>
    <source>
        <strain>Oregon-R</strain>
    </source>
</reference>
<reference key="2">
    <citation type="journal article" date="2000" name="Science">
        <title>The genome sequence of Drosophila melanogaster.</title>
        <authorList>
            <person name="Adams M.D."/>
            <person name="Celniker S.E."/>
            <person name="Holt R.A."/>
            <person name="Evans C.A."/>
            <person name="Gocayne J.D."/>
            <person name="Amanatides P.G."/>
            <person name="Scherer S.E."/>
            <person name="Li P.W."/>
            <person name="Hoskins R.A."/>
            <person name="Galle R.F."/>
            <person name="George R.A."/>
            <person name="Lewis S.E."/>
            <person name="Richards S."/>
            <person name="Ashburner M."/>
            <person name="Henderson S.N."/>
            <person name="Sutton G.G."/>
            <person name="Wortman J.R."/>
            <person name="Yandell M.D."/>
            <person name="Zhang Q."/>
            <person name="Chen L.X."/>
            <person name="Brandon R.C."/>
            <person name="Rogers Y.-H.C."/>
            <person name="Blazej R.G."/>
            <person name="Champe M."/>
            <person name="Pfeiffer B.D."/>
            <person name="Wan K.H."/>
            <person name="Doyle C."/>
            <person name="Baxter E.G."/>
            <person name="Helt G."/>
            <person name="Nelson C.R."/>
            <person name="Miklos G.L.G."/>
            <person name="Abril J.F."/>
            <person name="Agbayani A."/>
            <person name="An H.-J."/>
            <person name="Andrews-Pfannkoch C."/>
            <person name="Baldwin D."/>
            <person name="Ballew R.M."/>
            <person name="Basu A."/>
            <person name="Baxendale J."/>
            <person name="Bayraktaroglu L."/>
            <person name="Beasley E.M."/>
            <person name="Beeson K.Y."/>
            <person name="Benos P.V."/>
            <person name="Berman B.P."/>
            <person name="Bhandari D."/>
            <person name="Bolshakov S."/>
            <person name="Borkova D."/>
            <person name="Botchan M.R."/>
            <person name="Bouck J."/>
            <person name="Brokstein P."/>
            <person name="Brottier P."/>
            <person name="Burtis K.C."/>
            <person name="Busam D.A."/>
            <person name="Butler H."/>
            <person name="Cadieu E."/>
            <person name="Center A."/>
            <person name="Chandra I."/>
            <person name="Cherry J.M."/>
            <person name="Cawley S."/>
            <person name="Dahlke C."/>
            <person name="Davenport L.B."/>
            <person name="Davies P."/>
            <person name="de Pablos B."/>
            <person name="Delcher A."/>
            <person name="Deng Z."/>
            <person name="Mays A.D."/>
            <person name="Dew I."/>
            <person name="Dietz S.M."/>
            <person name="Dodson K."/>
            <person name="Doup L.E."/>
            <person name="Downes M."/>
            <person name="Dugan-Rocha S."/>
            <person name="Dunkov B.C."/>
            <person name="Dunn P."/>
            <person name="Durbin K.J."/>
            <person name="Evangelista C.C."/>
            <person name="Ferraz C."/>
            <person name="Ferriera S."/>
            <person name="Fleischmann W."/>
            <person name="Fosler C."/>
            <person name="Gabrielian A.E."/>
            <person name="Garg N.S."/>
            <person name="Gelbart W.M."/>
            <person name="Glasser K."/>
            <person name="Glodek A."/>
            <person name="Gong F."/>
            <person name="Gorrell J.H."/>
            <person name="Gu Z."/>
            <person name="Guan P."/>
            <person name="Harris M."/>
            <person name="Harris N.L."/>
            <person name="Harvey D.A."/>
            <person name="Heiman T.J."/>
            <person name="Hernandez J.R."/>
            <person name="Houck J."/>
            <person name="Hostin D."/>
            <person name="Houston K.A."/>
            <person name="Howland T.J."/>
            <person name="Wei M.-H."/>
            <person name="Ibegwam C."/>
            <person name="Jalali M."/>
            <person name="Kalush F."/>
            <person name="Karpen G.H."/>
            <person name="Ke Z."/>
            <person name="Kennison J.A."/>
            <person name="Ketchum K.A."/>
            <person name="Kimmel B.E."/>
            <person name="Kodira C.D."/>
            <person name="Kraft C.L."/>
            <person name="Kravitz S."/>
            <person name="Kulp D."/>
            <person name="Lai Z."/>
            <person name="Lasko P."/>
            <person name="Lei Y."/>
            <person name="Levitsky A.A."/>
            <person name="Li J.H."/>
            <person name="Li Z."/>
            <person name="Liang Y."/>
            <person name="Lin X."/>
            <person name="Liu X."/>
            <person name="Mattei B."/>
            <person name="McIntosh T.C."/>
            <person name="McLeod M.P."/>
            <person name="McPherson D."/>
            <person name="Merkulov G."/>
            <person name="Milshina N.V."/>
            <person name="Mobarry C."/>
            <person name="Morris J."/>
            <person name="Moshrefi A."/>
            <person name="Mount S.M."/>
            <person name="Moy M."/>
            <person name="Murphy B."/>
            <person name="Murphy L."/>
            <person name="Muzny D.M."/>
            <person name="Nelson D.L."/>
            <person name="Nelson D.R."/>
            <person name="Nelson K.A."/>
            <person name="Nixon K."/>
            <person name="Nusskern D.R."/>
            <person name="Pacleb J.M."/>
            <person name="Palazzolo M."/>
            <person name="Pittman G.S."/>
            <person name="Pan S."/>
            <person name="Pollard J."/>
            <person name="Puri V."/>
            <person name="Reese M.G."/>
            <person name="Reinert K."/>
            <person name="Remington K."/>
            <person name="Saunders R.D.C."/>
            <person name="Scheeler F."/>
            <person name="Shen H."/>
            <person name="Shue B.C."/>
            <person name="Siden-Kiamos I."/>
            <person name="Simpson M."/>
            <person name="Skupski M.P."/>
            <person name="Smith T.J."/>
            <person name="Spier E."/>
            <person name="Spradling A.C."/>
            <person name="Stapleton M."/>
            <person name="Strong R."/>
            <person name="Sun E."/>
            <person name="Svirskas R."/>
            <person name="Tector C."/>
            <person name="Turner R."/>
            <person name="Venter E."/>
            <person name="Wang A.H."/>
            <person name="Wang X."/>
            <person name="Wang Z.-Y."/>
            <person name="Wassarman D.A."/>
            <person name="Weinstock G.M."/>
            <person name="Weissenbach J."/>
            <person name="Williams S.M."/>
            <person name="Woodage T."/>
            <person name="Worley K.C."/>
            <person name="Wu D."/>
            <person name="Yang S."/>
            <person name="Yao Q.A."/>
            <person name="Ye J."/>
            <person name="Yeh R.-F."/>
            <person name="Zaveri J.S."/>
            <person name="Zhan M."/>
            <person name="Zhang G."/>
            <person name="Zhao Q."/>
            <person name="Zheng L."/>
            <person name="Zheng X.H."/>
            <person name="Zhong F.N."/>
            <person name="Zhong W."/>
            <person name="Zhou X."/>
            <person name="Zhu S.C."/>
            <person name="Zhu X."/>
            <person name="Smith H.O."/>
            <person name="Gibbs R.A."/>
            <person name="Myers E.W."/>
            <person name="Rubin G.M."/>
            <person name="Venter J.C."/>
        </authorList>
    </citation>
    <scope>NUCLEOTIDE SEQUENCE [LARGE SCALE GENOMIC DNA]</scope>
    <source>
        <strain>Berkeley</strain>
    </source>
</reference>
<reference key="3">
    <citation type="journal article" date="2002" name="Genome Biol.">
        <title>Annotation of the Drosophila melanogaster euchromatic genome: a systematic review.</title>
        <authorList>
            <person name="Misra S."/>
            <person name="Crosby M.A."/>
            <person name="Mungall C.J."/>
            <person name="Matthews B.B."/>
            <person name="Campbell K.S."/>
            <person name="Hradecky P."/>
            <person name="Huang Y."/>
            <person name="Kaminker J.S."/>
            <person name="Millburn G.H."/>
            <person name="Prochnik S.E."/>
            <person name="Smith C.D."/>
            <person name="Tupy J.L."/>
            <person name="Whitfield E.J."/>
            <person name="Bayraktaroglu L."/>
            <person name="Berman B.P."/>
            <person name="Bettencourt B.R."/>
            <person name="Celniker S.E."/>
            <person name="de Grey A.D.N.J."/>
            <person name="Drysdale R.A."/>
            <person name="Harris N.L."/>
            <person name="Richter J."/>
            <person name="Russo S."/>
            <person name="Schroeder A.J."/>
            <person name="Shu S.Q."/>
            <person name="Stapleton M."/>
            <person name="Yamada C."/>
            <person name="Ashburner M."/>
            <person name="Gelbart W.M."/>
            <person name="Rubin G.M."/>
            <person name="Lewis S.E."/>
        </authorList>
    </citation>
    <scope>GENOME REANNOTATION</scope>
    <source>
        <strain>Berkeley</strain>
    </source>
</reference>
<organism>
    <name type="scientific">Drosophila melanogaster</name>
    <name type="common">Fruit fly</name>
    <dbReference type="NCBI Taxonomy" id="7227"/>
    <lineage>
        <taxon>Eukaryota</taxon>
        <taxon>Metazoa</taxon>
        <taxon>Ecdysozoa</taxon>
        <taxon>Arthropoda</taxon>
        <taxon>Hexapoda</taxon>
        <taxon>Insecta</taxon>
        <taxon>Pterygota</taxon>
        <taxon>Neoptera</taxon>
        <taxon>Endopterygota</taxon>
        <taxon>Diptera</taxon>
        <taxon>Brachycera</taxon>
        <taxon>Muscomorpha</taxon>
        <taxon>Ephydroidea</taxon>
        <taxon>Drosophilidae</taxon>
        <taxon>Drosophila</taxon>
        <taxon>Sophophora</taxon>
    </lineage>
</organism>
<feature type="chain" id="PRO_0000096583" description="Male-specific sperm protein Mst84Da">
    <location>
        <begin position="1"/>
        <end position="63"/>
    </location>
</feature>
<name>MS84A_DROME</name>
<proteinExistence type="evidence at transcript level"/>
<sequence length="63" mass="5806">MYMYVNPNYVLVGGPCCGPCGGCGPCGGCGPCCGGCGPCCGPCGGCGPCCGGTSSFCGCGPCC</sequence>
<comment type="tissue specificity">
    <text>Testis.</text>
</comment>
<comment type="developmental stage">
    <text>Primary spermatocytes.</text>
</comment>
<comment type="domain">
    <text>This protein is mostly composed of repetitive C-G-P motifs.</text>
</comment>
<comment type="similarity">
    <text evidence="1">Belongs to the MST(3)CGP family.</text>
</comment>
<dbReference type="EMBL" id="X67703">
    <property type="protein sequence ID" value="CAA47937.1"/>
    <property type="molecule type" value="Genomic_DNA"/>
</dbReference>
<dbReference type="EMBL" id="AE014297">
    <property type="protein sequence ID" value="AAF54022.1"/>
    <property type="molecule type" value="Genomic_DNA"/>
</dbReference>
<dbReference type="PIR" id="S25772">
    <property type="entry name" value="S25772"/>
</dbReference>
<dbReference type="RefSeq" id="NP_524256.1">
    <property type="nucleotide sequence ID" value="NM_079532.3"/>
</dbReference>
<dbReference type="BioGRID" id="66080">
    <property type="interactions" value="20"/>
</dbReference>
<dbReference type="DIP" id="DIP-17053N"/>
<dbReference type="STRING" id="7227.FBpp0081103"/>
<dbReference type="PaxDb" id="7227-FBpp0081103"/>
<dbReference type="EnsemblMetazoa" id="FBtr0081584">
    <property type="protein sequence ID" value="FBpp0081103"/>
    <property type="gene ID" value="FBgn0004172"/>
</dbReference>
<dbReference type="GeneID" id="40889"/>
<dbReference type="KEGG" id="dme:Dmel_CG17946"/>
<dbReference type="AGR" id="FB:FBgn0004172"/>
<dbReference type="CTD" id="40889"/>
<dbReference type="FlyBase" id="FBgn0004172">
    <property type="gene designation" value="Mst84Da"/>
</dbReference>
<dbReference type="VEuPathDB" id="VectorBase:FBgn0004172"/>
<dbReference type="HOGENOM" id="CLU_2888054_0_0_1"/>
<dbReference type="InParanoid" id="Q01642"/>
<dbReference type="OMA" id="CASPCCY"/>
<dbReference type="BioGRID-ORCS" id="40889">
    <property type="hits" value="0 hits in 1 CRISPR screen"/>
</dbReference>
<dbReference type="GenomeRNAi" id="40889"/>
<dbReference type="PRO" id="PR:Q01642"/>
<dbReference type="Proteomes" id="UP000000803">
    <property type="component" value="Chromosome 3R"/>
</dbReference>
<dbReference type="Bgee" id="FBgn0004172">
    <property type="expression patterns" value="Expressed in early-mid elongation-stage spermatid (Drosophila) in testis and 63 other cell types or tissues"/>
</dbReference>
<dbReference type="GO" id="GO:0007288">
    <property type="term" value="P:sperm axoneme assembly"/>
    <property type="evidence" value="ECO:0000316"/>
    <property type="project" value="FlyBase"/>
</dbReference>
<dbReference type="GO" id="GO:0007283">
    <property type="term" value="P:spermatogenesis"/>
    <property type="evidence" value="ECO:0000316"/>
    <property type="project" value="FlyBase"/>
</dbReference>
<dbReference type="InterPro" id="IPR005634">
    <property type="entry name" value="MSSP"/>
</dbReference>
<dbReference type="Pfam" id="PF03940">
    <property type="entry name" value="MSSP"/>
    <property type="match status" value="1"/>
</dbReference>
<accession>Q01642</accession>
<accession>Q9VIA3</accession>